<evidence type="ECO:0000250" key="1"/>
<evidence type="ECO:0000255" key="2">
    <source>
        <dbReference type="HAMAP-Rule" id="MF_00047"/>
    </source>
</evidence>
<proteinExistence type="inferred from homology"/>
<protein>
    <recommendedName>
        <fullName evidence="2">D-alanine--D-alanine ligase</fullName>
        <ecNumber evidence="2">6.3.2.4</ecNumber>
    </recommendedName>
    <alternativeName>
        <fullName evidence="2">D-Ala-D-Ala ligase</fullName>
    </alternativeName>
    <alternativeName>
        <fullName evidence="2">D-alanylalanine synthetase</fullName>
    </alternativeName>
</protein>
<reference key="1">
    <citation type="journal article" date="2007" name="Science">
        <title>Legumes symbioses: absence of nod genes in photosynthetic bradyrhizobia.</title>
        <authorList>
            <person name="Giraud E."/>
            <person name="Moulin L."/>
            <person name="Vallenet D."/>
            <person name="Barbe V."/>
            <person name="Cytryn E."/>
            <person name="Avarre J.-C."/>
            <person name="Jaubert M."/>
            <person name="Simon D."/>
            <person name="Cartieaux F."/>
            <person name="Prin Y."/>
            <person name="Bena G."/>
            <person name="Hannibal L."/>
            <person name="Fardoux J."/>
            <person name="Kojadinovic M."/>
            <person name="Vuillet L."/>
            <person name="Lajus A."/>
            <person name="Cruveiller S."/>
            <person name="Rouy Z."/>
            <person name="Mangenot S."/>
            <person name="Segurens B."/>
            <person name="Dossat C."/>
            <person name="Franck W.L."/>
            <person name="Chang W.-S."/>
            <person name="Saunders E."/>
            <person name="Bruce D."/>
            <person name="Richardson P."/>
            <person name="Normand P."/>
            <person name="Dreyfus B."/>
            <person name="Pignol D."/>
            <person name="Stacey G."/>
            <person name="Emerich D."/>
            <person name="Vermeglio A."/>
            <person name="Medigue C."/>
            <person name="Sadowsky M."/>
        </authorList>
    </citation>
    <scope>NUCLEOTIDE SEQUENCE [LARGE SCALE GENOMIC DNA]</scope>
    <source>
        <strain>BTAi1 / ATCC BAA-1182</strain>
    </source>
</reference>
<sequence>MAHNTTRVAILFGGRSAEHDVSRASAANIFRSLDASRYAVTLIGITPEGRWVLADAVNARTAQALTVPPDGPQIVLLPAGQGRALVLGDGAAAPRELTFDVIFPVLHGPNGEDGTMQGALELADVAYVGARVMGSAAAMDKDVAKRLLRDAGLPIVPFVTMTAAAPVSYEDAVHAVGCSELFIKPANLGSSVGISKARTPQEFAAACDLALRFDGKILIERCISPVREIECAVLEHADGEVKASELGEIVPASSHGFYSYAAKYTDASGASLHVPAQVEPGLAQRIRKMATEVFGVLCCESLARVDFFVHGEEVYVNEVNTLPGFTNISMYPKMWEATGLPQPALMDALIAHALARHARLRQLASQR</sequence>
<dbReference type="EC" id="6.3.2.4" evidence="2"/>
<dbReference type="EMBL" id="CP000494">
    <property type="protein sequence ID" value="ABQ37349.1"/>
    <property type="molecule type" value="Genomic_DNA"/>
</dbReference>
<dbReference type="RefSeq" id="WP_012045314.1">
    <property type="nucleotide sequence ID" value="NC_009485.1"/>
</dbReference>
<dbReference type="SMR" id="A5EMF5"/>
<dbReference type="STRING" id="288000.BBta_5374"/>
<dbReference type="KEGG" id="bbt:BBta_5374"/>
<dbReference type="eggNOG" id="COG1181">
    <property type="taxonomic scope" value="Bacteria"/>
</dbReference>
<dbReference type="HOGENOM" id="CLU_039268_0_0_5"/>
<dbReference type="OrthoDB" id="9813261at2"/>
<dbReference type="UniPathway" id="UPA00219"/>
<dbReference type="Proteomes" id="UP000000246">
    <property type="component" value="Chromosome"/>
</dbReference>
<dbReference type="GO" id="GO:0005829">
    <property type="term" value="C:cytosol"/>
    <property type="evidence" value="ECO:0007669"/>
    <property type="project" value="TreeGrafter"/>
</dbReference>
<dbReference type="GO" id="GO:0005524">
    <property type="term" value="F:ATP binding"/>
    <property type="evidence" value="ECO:0007669"/>
    <property type="project" value="UniProtKB-KW"/>
</dbReference>
<dbReference type="GO" id="GO:0008716">
    <property type="term" value="F:D-alanine-D-alanine ligase activity"/>
    <property type="evidence" value="ECO:0007669"/>
    <property type="project" value="UniProtKB-UniRule"/>
</dbReference>
<dbReference type="GO" id="GO:0046872">
    <property type="term" value="F:metal ion binding"/>
    <property type="evidence" value="ECO:0007669"/>
    <property type="project" value="UniProtKB-KW"/>
</dbReference>
<dbReference type="GO" id="GO:0071555">
    <property type="term" value="P:cell wall organization"/>
    <property type="evidence" value="ECO:0007669"/>
    <property type="project" value="UniProtKB-KW"/>
</dbReference>
<dbReference type="GO" id="GO:0009252">
    <property type="term" value="P:peptidoglycan biosynthetic process"/>
    <property type="evidence" value="ECO:0007669"/>
    <property type="project" value="UniProtKB-UniRule"/>
</dbReference>
<dbReference type="GO" id="GO:0008360">
    <property type="term" value="P:regulation of cell shape"/>
    <property type="evidence" value="ECO:0007669"/>
    <property type="project" value="UniProtKB-KW"/>
</dbReference>
<dbReference type="FunFam" id="3.30.470.20:FF:000008">
    <property type="entry name" value="D-alanine--D-alanine ligase"/>
    <property type="match status" value="1"/>
</dbReference>
<dbReference type="Gene3D" id="3.40.50.20">
    <property type="match status" value="1"/>
</dbReference>
<dbReference type="Gene3D" id="3.30.1490.20">
    <property type="entry name" value="ATP-grasp fold, A domain"/>
    <property type="match status" value="1"/>
</dbReference>
<dbReference type="Gene3D" id="3.30.470.20">
    <property type="entry name" value="ATP-grasp fold, B domain"/>
    <property type="match status" value="1"/>
</dbReference>
<dbReference type="HAMAP" id="MF_00047">
    <property type="entry name" value="Dala_Dala_lig"/>
    <property type="match status" value="1"/>
</dbReference>
<dbReference type="InterPro" id="IPR011761">
    <property type="entry name" value="ATP-grasp"/>
</dbReference>
<dbReference type="InterPro" id="IPR013815">
    <property type="entry name" value="ATP_grasp_subdomain_1"/>
</dbReference>
<dbReference type="InterPro" id="IPR000291">
    <property type="entry name" value="D-Ala_lig_Van_CS"/>
</dbReference>
<dbReference type="InterPro" id="IPR005905">
    <property type="entry name" value="D_ala_D_ala"/>
</dbReference>
<dbReference type="InterPro" id="IPR011095">
    <property type="entry name" value="Dala_Dala_lig_C"/>
</dbReference>
<dbReference type="InterPro" id="IPR011127">
    <property type="entry name" value="Dala_Dala_lig_N"/>
</dbReference>
<dbReference type="InterPro" id="IPR016185">
    <property type="entry name" value="PreATP-grasp_dom_sf"/>
</dbReference>
<dbReference type="NCBIfam" id="TIGR01205">
    <property type="entry name" value="D_ala_D_alaTIGR"/>
    <property type="match status" value="1"/>
</dbReference>
<dbReference type="NCBIfam" id="NF002528">
    <property type="entry name" value="PRK01966.1-4"/>
    <property type="match status" value="1"/>
</dbReference>
<dbReference type="PANTHER" id="PTHR23132">
    <property type="entry name" value="D-ALANINE--D-ALANINE LIGASE"/>
    <property type="match status" value="1"/>
</dbReference>
<dbReference type="PANTHER" id="PTHR23132:SF25">
    <property type="entry name" value="D-ALANINE--D-ALANINE LIGASE A"/>
    <property type="match status" value="1"/>
</dbReference>
<dbReference type="Pfam" id="PF07478">
    <property type="entry name" value="Dala_Dala_lig_C"/>
    <property type="match status" value="1"/>
</dbReference>
<dbReference type="Pfam" id="PF01820">
    <property type="entry name" value="Dala_Dala_lig_N"/>
    <property type="match status" value="1"/>
</dbReference>
<dbReference type="PIRSF" id="PIRSF039102">
    <property type="entry name" value="Ddl/VanB"/>
    <property type="match status" value="1"/>
</dbReference>
<dbReference type="SUPFAM" id="SSF56059">
    <property type="entry name" value="Glutathione synthetase ATP-binding domain-like"/>
    <property type="match status" value="1"/>
</dbReference>
<dbReference type="SUPFAM" id="SSF52440">
    <property type="entry name" value="PreATP-grasp domain"/>
    <property type="match status" value="1"/>
</dbReference>
<dbReference type="PROSITE" id="PS50975">
    <property type="entry name" value="ATP_GRASP"/>
    <property type="match status" value="1"/>
</dbReference>
<dbReference type="PROSITE" id="PS00843">
    <property type="entry name" value="DALA_DALA_LIGASE_1"/>
    <property type="match status" value="1"/>
</dbReference>
<dbReference type="PROSITE" id="PS00844">
    <property type="entry name" value="DALA_DALA_LIGASE_2"/>
    <property type="match status" value="1"/>
</dbReference>
<comment type="function">
    <text evidence="2">Cell wall formation.</text>
</comment>
<comment type="catalytic activity">
    <reaction evidence="2">
        <text>2 D-alanine + ATP = D-alanyl-D-alanine + ADP + phosphate + H(+)</text>
        <dbReference type="Rhea" id="RHEA:11224"/>
        <dbReference type="ChEBI" id="CHEBI:15378"/>
        <dbReference type="ChEBI" id="CHEBI:30616"/>
        <dbReference type="ChEBI" id="CHEBI:43474"/>
        <dbReference type="ChEBI" id="CHEBI:57416"/>
        <dbReference type="ChEBI" id="CHEBI:57822"/>
        <dbReference type="ChEBI" id="CHEBI:456216"/>
        <dbReference type="EC" id="6.3.2.4"/>
    </reaction>
</comment>
<comment type="cofactor">
    <cofactor evidence="1">
        <name>Mg(2+)</name>
        <dbReference type="ChEBI" id="CHEBI:18420"/>
    </cofactor>
    <cofactor evidence="1">
        <name>Mn(2+)</name>
        <dbReference type="ChEBI" id="CHEBI:29035"/>
    </cofactor>
    <text evidence="1">Binds 2 magnesium or manganese ions per subunit.</text>
</comment>
<comment type="pathway">
    <text evidence="2">Cell wall biogenesis; peptidoglycan biosynthesis.</text>
</comment>
<comment type="subcellular location">
    <subcellularLocation>
        <location evidence="2">Cytoplasm</location>
    </subcellularLocation>
</comment>
<comment type="similarity">
    <text evidence="2">Belongs to the D-alanine--D-alanine ligase family.</text>
</comment>
<gene>
    <name evidence="2" type="primary">ddl</name>
    <name type="ordered locus">BBta_5374</name>
</gene>
<feature type="chain" id="PRO_0000341064" description="D-alanine--D-alanine ligase">
    <location>
        <begin position="1"/>
        <end position="367"/>
    </location>
</feature>
<feature type="domain" description="ATP-grasp" evidence="2">
    <location>
        <begin position="145"/>
        <end position="351"/>
    </location>
</feature>
<feature type="binding site" evidence="2">
    <location>
        <begin position="174"/>
        <end position="229"/>
    </location>
    <ligand>
        <name>ATP</name>
        <dbReference type="ChEBI" id="CHEBI:30616"/>
    </ligand>
</feature>
<feature type="binding site" evidence="2">
    <location>
        <position position="306"/>
    </location>
    <ligand>
        <name>Mg(2+)</name>
        <dbReference type="ChEBI" id="CHEBI:18420"/>
        <label>1</label>
    </ligand>
</feature>
<feature type="binding site" evidence="2">
    <location>
        <position position="318"/>
    </location>
    <ligand>
        <name>Mg(2+)</name>
        <dbReference type="ChEBI" id="CHEBI:18420"/>
        <label>1</label>
    </ligand>
</feature>
<feature type="binding site" evidence="2">
    <location>
        <position position="318"/>
    </location>
    <ligand>
        <name>Mg(2+)</name>
        <dbReference type="ChEBI" id="CHEBI:18420"/>
        <label>2</label>
    </ligand>
</feature>
<feature type="binding site" evidence="2">
    <location>
        <position position="320"/>
    </location>
    <ligand>
        <name>Mg(2+)</name>
        <dbReference type="ChEBI" id="CHEBI:18420"/>
        <label>2</label>
    </ligand>
</feature>
<accession>A5EMF5</accession>
<keyword id="KW-0067">ATP-binding</keyword>
<keyword id="KW-0133">Cell shape</keyword>
<keyword id="KW-0961">Cell wall biogenesis/degradation</keyword>
<keyword id="KW-0963">Cytoplasm</keyword>
<keyword id="KW-0436">Ligase</keyword>
<keyword id="KW-0460">Magnesium</keyword>
<keyword id="KW-0464">Manganese</keyword>
<keyword id="KW-0479">Metal-binding</keyword>
<keyword id="KW-0547">Nucleotide-binding</keyword>
<keyword id="KW-0573">Peptidoglycan synthesis</keyword>
<keyword id="KW-1185">Reference proteome</keyword>
<organism>
    <name type="scientific">Bradyrhizobium sp. (strain BTAi1 / ATCC BAA-1182)</name>
    <dbReference type="NCBI Taxonomy" id="288000"/>
    <lineage>
        <taxon>Bacteria</taxon>
        <taxon>Pseudomonadati</taxon>
        <taxon>Pseudomonadota</taxon>
        <taxon>Alphaproteobacteria</taxon>
        <taxon>Hyphomicrobiales</taxon>
        <taxon>Nitrobacteraceae</taxon>
        <taxon>Bradyrhizobium</taxon>
    </lineage>
</organism>
<name>DDL_BRASB</name>